<name>EX7S_CHLFF</name>
<reference key="1">
    <citation type="journal article" date="2006" name="DNA Res.">
        <title>Genome sequence of the cat pathogen, Chlamydophila felis.</title>
        <authorList>
            <person name="Azuma Y."/>
            <person name="Hirakawa H."/>
            <person name="Yamashita A."/>
            <person name="Cai Y."/>
            <person name="Rahman M.A."/>
            <person name="Suzuki H."/>
            <person name="Mitaku S."/>
            <person name="Toh H."/>
            <person name="Goto S."/>
            <person name="Murakami T."/>
            <person name="Sugi K."/>
            <person name="Hayashi H."/>
            <person name="Fukushi H."/>
            <person name="Hattori M."/>
            <person name="Kuhara S."/>
            <person name="Shirai M."/>
        </authorList>
    </citation>
    <scope>NUCLEOTIDE SEQUENCE [LARGE SCALE GENOMIC DNA]</scope>
    <source>
        <strain>Fe/C-56</strain>
    </source>
</reference>
<comment type="function">
    <text evidence="1">Bidirectionally degrades single-stranded DNA into large acid-insoluble oligonucleotides, which are then degraded further into small acid-soluble oligonucleotides.</text>
</comment>
<comment type="catalytic activity">
    <reaction evidence="1">
        <text>Exonucleolytic cleavage in either 5'- to 3'- or 3'- to 5'-direction to yield nucleoside 5'-phosphates.</text>
        <dbReference type="EC" id="3.1.11.6"/>
    </reaction>
</comment>
<comment type="subunit">
    <text evidence="1">Heterooligomer composed of large and small subunits.</text>
</comment>
<comment type="subcellular location">
    <subcellularLocation>
        <location evidence="1">Cytoplasm</location>
    </subcellularLocation>
</comment>
<comment type="similarity">
    <text evidence="1">Belongs to the XseB family.</text>
</comment>
<dbReference type="EC" id="3.1.11.6" evidence="1"/>
<dbReference type="EMBL" id="AP006861">
    <property type="protein sequence ID" value="BAE81469.1"/>
    <property type="molecule type" value="Genomic_DNA"/>
</dbReference>
<dbReference type="RefSeq" id="WP_011458247.1">
    <property type="nucleotide sequence ID" value="NC_007899.1"/>
</dbReference>
<dbReference type="SMR" id="Q253R9"/>
<dbReference type="STRING" id="264202.CF0697"/>
<dbReference type="KEGG" id="cfe:CF0697"/>
<dbReference type="eggNOG" id="COG1722">
    <property type="taxonomic scope" value="Bacteria"/>
</dbReference>
<dbReference type="HOGENOM" id="CLU_145918_3_4_0"/>
<dbReference type="OrthoDB" id="21553at2"/>
<dbReference type="Proteomes" id="UP000001260">
    <property type="component" value="Chromosome"/>
</dbReference>
<dbReference type="GO" id="GO:0005829">
    <property type="term" value="C:cytosol"/>
    <property type="evidence" value="ECO:0007669"/>
    <property type="project" value="TreeGrafter"/>
</dbReference>
<dbReference type="GO" id="GO:0009318">
    <property type="term" value="C:exodeoxyribonuclease VII complex"/>
    <property type="evidence" value="ECO:0007669"/>
    <property type="project" value="InterPro"/>
</dbReference>
<dbReference type="GO" id="GO:0008855">
    <property type="term" value="F:exodeoxyribonuclease VII activity"/>
    <property type="evidence" value="ECO:0007669"/>
    <property type="project" value="UniProtKB-UniRule"/>
</dbReference>
<dbReference type="GO" id="GO:0006308">
    <property type="term" value="P:DNA catabolic process"/>
    <property type="evidence" value="ECO:0007669"/>
    <property type="project" value="UniProtKB-UniRule"/>
</dbReference>
<dbReference type="Gene3D" id="1.10.287.1040">
    <property type="entry name" value="Exonuclease VII, small subunit"/>
    <property type="match status" value="1"/>
</dbReference>
<dbReference type="HAMAP" id="MF_00337">
    <property type="entry name" value="Exonuc_7_S"/>
    <property type="match status" value="1"/>
</dbReference>
<dbReference type="InterPro" id="IPR003761">
    <property type="entry name" value="Exonuc_VII_S"/>
</dbReference>
<dbReference type="InterPro" id="IPR037004">
    <property type="entry name" value="Exonuc_VII_ssu_sf"/>
</dbReference>
<dbReference type="NCBIfam" id="NF002140">
    <property type="entry name" value="PRK00977.1-4"/>
    <property type="match status" value="1"/>
</dbReference>
<dbReference type="NCBIfam" id="TIGR01280">
    <property type="entry name" value="xseB"/>
    <property type="match status" value="1"/>
</dbReference>
<dbReference type="PANTHER" id="PTHR34137">
    <property type="entry name" value="EXODEOXYRIBONUCLEASE 7 SMALL SUBUNIT"/>
    <property type="match status" value="1"/>
</dbReference>
<dbReference type="PANTHER" id="PTHR34137:SF1">
    <property type="entry name" value="EXODEOXYRIBONUCLEASE 7 SMALL SUBUNIT"/>
    <property type="match status" value="1"/>
</dbReference>
<dbReference type="Pfam" id="PF02609">
    <property type="entry name" value="Exonuc_VII_S"/>
    <property type="match status" value="1"/>
</dbReference>
<dbReference type="PIRSF" id="PIRSF006488">
    <property type="entry name" value="Exonuc_VII_S"/>
    <property type="match status" value="1"/>
</dbReference>
<dbReference type="SUPFAM" id="SSF116842">
    <property type="entry name" value="XseB-like"/>
    <property type="match status" value="1"/>
</dbReference>
<gene>
    <name evidence="1" type="primary">xseB</name>
    <name type="ordered locus">CF0697</name>
</gene>
<feature type="chain" id="PRO_1000119909" description="Exodeoxyribonuclease 7 small subunit">
    <location>
        <begin position="1"/>
        <end position="75"/>
    </location>
</feature>
<sequence length="75" mass="8861">MEEIPFENAMERLEEIVDLMNQPSTSLDSSLKLYEEADALMRICESRIRKAEDRVRELSERRNETLLSEEESFAH</sequence>
<accession>Q253R9</accession>
<evidence type="ECO:0000255" key="1">
    <source>
        <dbReference type="HAMAP-Rule" id="MF_00337"/>
    </source>
</evidence>
<protein>
    <recommendedName>
        <fullName evidence="1">Exodeoxyribonuclease 7 small subunit</fullName>
        <ecNumber evidence="1">3.1.11.6</ecNumber>
    </recommendedName>
    <alternativeName>
        <fullName evidence="1">Exodeoxyribonuclease VII small subunit</fullName>
        <shortName evidence="1">Exonuclease VII small subunit</shortName>
    </alternativeName>
</protein>
<proteinExistence type="inferred from homology"/>
<keyword id="KW-0963">Cytoplasm</keyword>
<keyword id="KW-0269">Exonuclease</keyword>
<keyword id="KW-0378">Hydrolase</keyword>
<keyword id="KW-0540">Nuclease</keyword>
<organism>
    <name type="scientific">Chlamydia felis (strain Fe/C-56)</name>
    <name type="common">Chlamydophila felis</name>
    <dbReference type="NCBI Taxonomy" id="264202"/>
    <lineage>
        <taxon>Bacteria</taxon>
        <taxon>Pseudomonadati</taxon>
        <taxon>Chlamydiota</taxon>
        <taxon>Chlamydiia</taxon>
        <taxon>Chlamydiales</taxon>
        <taxon>Chlamydiaceae</taxon>
        <taxon>Chlamydia/Chlamydophila group</taxon>
        <taxon>Chlamydia</taxon>
    </lineage>
</organism>